<proteinExistence type="inferred from homology"/>
<accession>A8GFI9</accession>
<reference key="1">
    <citation type="submission" date="2007-09" db="EMBL/GenBank/DDBJ databases">
        <title>Complete sequence of chromosome of Serratia proteamaculans 568.</title>
        <authorList>
            <consortium name="US DOE Joint Genome Institute"/>
            <person name="Copeland A."/>
            <person name="Lucas S."/>
            <person name="Lapidus A."/>
            <person name="Barry K."/>
            <person name="Glavina del Rio T."/>
            <person name="Dalin E."/>
            <person name="Tice H."/>
            <person name="Pitluck S."/>
            <person name="Chain P."/>
            <person name="Malfatti S."/>
            <person name="Shin M."/>
            <person name="Vergez L."/>
            <person name="Schmutz J."/>
            <person name="Larimer F."/>
            <person name="Land M."/>
            <person name="Hauser L."/>
            <person name="Kyrpides N."/>
            <person name="Kim E."/>
            <person name="Taghavi S."/>
            <person name="Newman L."/>
            <person name="Vangronsveld J."/>
            <person name="van der Lelie D."/>
            <person name="Richardson P."/>
        </authorList>
    </citation>
    <scope>NUCLEOTIDE SEQUENCE [LARGE SCALE GENOMIC DNA]</scope>
    <source>
        <strain>568</strain>
    </source>
</reference>
<sequence>MTIILGIDPGSRVTGYGLIRQQGRQLTYVASGCIRTVVDDMPTRLKLIYAGVSEIITQFKPDFFAIEQVFMAKNPDSALKLGQARGVAIVAAVNQDLEVFEYAARQVKQTVVGTGAAEKAQVQHMVRSLLKLSANPQADAADALAIAITHCHLSQNVLRMSEGRLNLARGRLK</sequence>
<keyword id="KW-0963">Cytoplasm</keyword>
<keyword id="KW-0227">DNA damage</keyword>
<keyword id="KW-0233">DNA recombination</keyword>
<keyword id="KW-0234">DNA repair</keyword>
<keyword id="KW-0238">DNA-binding</keyword>
<keyword id="KW-0255">Endonuclease</keyword>
<keyword id="KW-0378">Hydrolase</keyword>
<keyword id="KW-0460">Magnesium</keyword>
<keyword id="KW-0479">Metal-binding</keyword>
<keyword id="KW-0540">Nuclease</keyword>
<evidence type="ECO:0000255" key="1">
    <source>
        <dbReference type="HAMAP-Rule" id="MF_00034"/>
    </source>
</evidence>
<protein>
    <recommendedName>
        <fullName evidence="1">Crossover junction endodeoxyribonuclease RuvC</fullName>
        <ecNumber evidence="1">3.1.21.10</ecNumber>
    </recommendedName>
    <alternativeName>
        <fullName evidence="1">Holliday junction nuclease RuvC</fullName>
    </alternativeName>
    <alternativeName>
        <fullName evidence="1">Holliday junction resolvase RuvC</fullName>
    </alternativeName>
</protein>
<gene>
    <name evidence="1" type="primary">ruvC</name>
    <name type="ordered locus">Spro_2778</name>
</gene>
<feature type="chain" id="PRO_1000057268" description="Crossover junction endodeoxyribonuclease RuvC">
    <location>
        <begin position="1"/>
        <end position="173"/>
    </location>
</feature>
<feature type="active site" evidence="1">
    <location>
        <position position="8"/>
    </location>
</feature>
<feature type="active site" evidence="1">
    <location>
        <position position="67"/>
    </location>
</feature>
<feature type="active site" evidence="1">
    <location>
        <position position="139"/>
    </location>
</feature>
<feature type="binding site" evidence="1">
    <location>
        <position position="8"/>
    </location>
    <ligand>
        <name>Mg(2+)</name>
        <dbReference type="ChEBI" id="CHEBI:18420"/>
        <label>1</label>
    </ligand>
</feature>
<feature type="binding site" evidence="1">
    <location>
        <position position="67"/>
    </location>
    <ligand>
        <name>Mg(2+)</name>
        <dbReference type="ChEBI" id="CHEBI:18420"/>
        <label>2</label>
    </ligand>
</feature>
<feature type="binding site" evidence="1">
    <location>
        <position position="139"/>
    </location>
    <ligand>
        <name>Mg(2+)</name>
        <dbReference type="ChEBI" id="CHEBI:18420"/>
        <label>1</label>
    </ligand>
</feature>
<organism>
    <name type="scientific">Serratia proteamaculans (strain 568)</name>
    <dbReference type="NCBI Taxonomy" id="399741"/>
    <lineage>
        <taxon>Bacteria</taxon>
        <taxon>Pseudomonadati</taxon>
        <taxon>Pseudomonadota</taxon>
        <taxon>Gammaproteobacteria</taxon>
        <taxon>Enterobacterales</taxon>
        <taxon>Yersiniaceae</taxon>
        <taxon>Serratia</taxon>
    </lineage>
</organism>
<dbReference type="EC" id="3.1.21.10" evidence="1"/>
<dbReference type="EMBL" id="CP000826">
    <property type="protein sequence ID" value="ABV41879.1"/>
    <property type="molecule type" value="Genomic_DNA"/>
</dbReference>
<dbReference type="SMR" id="A8GFI9"/>
<dbReference type="STRING" id="399741.Spro_2778"/>
<dbReference type="KEGG" id="spe:Spro_2778"/>
<dbReference type="eggNOG" id="COG0817">
    <property type="taxonomic scope" value="Bacteria"/>
</dbReference>
<dbReference type="HOGENOM" id="CLU_091257_2_1_6"/>
<dbReference type="OrthoDB" id="9805499at2"/>
<dbReference type="GO" id="GO:0005737">
    <property type="term" value="C:cytoplasm"/>
    <property type="evidence" value="ECO:0007669"/>
    <property type="project" value="UniProtKB-SubCell"/>
</dbReference>
<dbReference type="GO" id="GO:0048476">
    <property type="term" value="C:Holliday junction resolvase complex"/>
    <property type="evidence" value="ECO:0007669"/>
    <property type="project" value="UniProtKB-UniRule"/>
</dbReference>
<dbReference type="GO" id="GO:0008821">
    <property type="term" value="F:crossover junction DNA endonuclease activity"/>
    <property type="evidence" value="ECO:0007669"/>
    <property type="project" value="UniProtKB-UniRule"/>
</dbReference>
<dbReference type="GO" id="GO:0003677">
    <property type="term" value="F:DNA binding"/>
    <property type="evidence" value="ECO:0007669"/>
    <property type="project" value="UniProtKB-KW"/>
</dbReference>
<dbReference type="GO" id="GO:0000287">
    <property type="term" value="F:magnesium ion binding"/>
    <property type="evidence" value="ECO:0007669"/>
    <property type="project" value="UniProtKB-UniRule"/>
</dbReference>
<dbReference type="GO" id="GO:0006310">
    <property type="term" value="P:DNA recombination"/>
    <property type="evidence" value="ECO:0007669"/>
    <property type="project" value="UniProtKB-UniRule"/>
</dbReference>
<dbReference type="GO" id="GO:0006281">
    <property type="term" value="P:DNA repair"/>
    <property type="evidence" value="ECO:0007669"/>
    <property type="project" value="UniProtKB-UniRule"/>
</dbReference>
<dbReference type="CDD" id="cd16962">
    <property type="entry name" value="RuvC"/>
    <property type="match status" value="1"/>
</dbReference>
<dbReference type="FunFam" id="3.30.420.10:FF:000002">
    <property type="entry name" value="Crossover junction endodeoxyribonuclease RuvC"/>
    <property type="match status" value="1"/>
</dbReference>
<dbReference type="Gene3D" id="3.30.420.10">
    <property type="entry name" value="Ribonuclease H-like superfamily/Ribonuclease H"/>
    <property type="match status" value="1"/>
</dbReference>
<dbReference type="HAMAP" id="MF_00034">
    <property type="entry name" value="RuvC"/>
    <property type="match status" value="1"/>
</dbReference>
<dbReference type="InterPro" id="IPR012337">
    <property type="entry name" value="RNaseH-like_sf"/>
</dbReference>
<dbReference type="InterPro" id="IPR036397">
    <property type="entry name" value="RNaseH_sf"/>
</dbReference>
<dbReference type="InterPro" id="IPR020563">
    <property type="entry name" value="X-over_junc_endoDNase_Mg_BS"/>
</dbReference>
<dbReference type="InterPro" id="IPR002176">
    <property type="entry name" value="X-over_junc_endoDNase_RuvC"/>
</dbReference>
<dbReference type="NCBIfam" id="NF000711">
    <property type="entry name" value="PRK00039.2-1"/>
    <property type="match status" value="1"/>
</dbReference>
<dbReference type="NCBIfam" id="TIGR00228">
    <property type="entry name" value="ruvC"/>
    <property type="match status" value="1"/>
</dbReference>
<dbReference type="PANTHER" id="PTHR30194">
    <property type="entry name" value="CROSSOVER JUNCTION ENDODEOXYRIBONUCLEASE RUVC"/>
    <property type="match status" value="1"/>
</dbReference>
<dbReference type="PANTHER" id="PTHR30194:SF3">
    <property type="entry name" value="CROSSOVER JUNCTION ENDODEOXYRIBONUCLEASE RUVC"/>
    <property type="match status" value="1"/>
</dbReference>
<dbReference type="Pfam" id="PF02075">
    <property type="entry name" value="RuvC"/>
    <property type="match status" value="1"/>
</dbReference>
<dbReference type="PRINTS" id="PR00696">
    <property type="entry name" value="RSOLVASERUVC"/>
</dbReference>
<dbReference type="SUPFAM" id="SSF53098">
    <property type="entry name" value="Ribonuclease H-like"/>
    <property type="match status" value="1"/>
</dbReference>
<dbReference type="PROSITE" id="PS01321">
    <property type="entry name" value="RUVC"/>
    <property type="match status" value="1"/>
</dbReference>
<comment type="function">
    <text evidence="1">The RuvA-RuvB-RuvC complex processes Holliday junction (HJ) DNA during genetic recombination and DNA repair. Endonuclease that resolves HJ intermediates. Cleaves cruciform DNA by making single-stranded nicks across the HJ at symmetrical positions within the homologous arms, yielding a 5'-phosphate and a 3'-hydroxyl group; requires a central core of homology in the junction. The consensus cleavage sequence is 5'-(A/T)TT(C/G)-3'. Cleavage occurs on the 3'-side of the TT dinucleotide at the point of strand exchange. HJ branch migration catalyzed by RuvA-RuvB allows RuvC to scan DNA until it finds its consensus sequence, where it cleaves and resolves the cruciform DNA.</text>
</comment>
<comment type="catalytic activity">
    <reaction evidence="1">
        <text>Endonucleolytic cleavage at a junction such as a reciprocal single-stranded crossover between two homologous DNA duplexes (Holliday junction).</text>
        <dbReference type="EC" id="3.1.21.10"/>
    </reaction>
</comment>
<comment type="cofactor">
    <cofactor evidence="1">
        <name>Mg(2+)</name>
        <dbReference type="ChEBI" id="CHEBI:18420"/>
    </cofactor>
    <text evidence="1">Binds 2 Mg(2+) ion per subunit.</text>
</comment>
<comment type="subunit">
    <text evidence="1">Homodimer which binds Holliday junction (HJ) DNA. The HJ becomes 2-fold symmetrical on binding to RuvC with unstacked arms; it has a different conformation from HJ DNA in complex with RuvA. In the full resolvosome a probable DNA-RuvA(4)-RuvB(12)-RuvC(2) complex forms which resolves the HJ.</text>
</comment>
<comment type="subcellular location">
    <subcellularLocation>
        <location evidence="1">Cytoplasm</location>
    </subcellularLocation>
</comment>
<comment type="similarity">
    <text evidence="1">Belongs to the RuvC family.</text>
</comment>
<name>RUVC_SERP5</name>